<dbReference type="EC" id="6.1.1.16"/>
<dbReference type="EMBL" id="AAFI02000098">
    <property type="protein sequence ID" value="EAL63854.1"/>
    <property type="molecule type" value="Genomic_DNA"/>
</dbReference>
<dbReference type="RefSeq" id="XP_637369.1">
    <property type="nucleotide sequence ID" value="XM_632277.1"/>
</dbReference>
<dbReference type="SMR" id="Q54KR1"/>
<dbReference type="FunCoup" id="Q54KR1">
    <property type="interactions" value="885"/>
</dbReference>
<dbReference type="STRING" id="44689.Q54KR1"/>
<dbReference type="PaxDb" id="44689-DDB0231318"/>
<dbReference type="EnsemblProtists" id="EAL63854">
    <property type="protein sequence ID" value="EAL63854"/>
    <property type="gene ID" value="DDB_G0287159"/>
</dbReference>
<dbReference type="GeneID" id="8625991"/>
<dbReference type="KEGG" id="ddi:DDB_G0287159"/>
<dbReference type="dictyBase" id="DDB_G0287159">
    <property type="gene designation" value="cysS"/>
</dbReference>
<dbReference type="VEuPathDB" id="AmoebaDB:DDB_G0287159"/>
<dbReference type="eggNOG" id="KOG2007">
    <property type="taxonomic scope" value="Eukaryota"/>
</dbReference>
<dbReference type="HOGENOM" id="CLU_013528_3_1_1"/>
<dbReference type="InParanoid" id="Q54KR1"/>
<dbReference type="OMA" id="FHNDMKS"/>
<dbReference type="PhylomeDB" id="Q54KR1"/>
<dbReference type="PRO" id="PR:Q54KR1"/>
<dbReference type="Proteomes" id="UP000002195">
    <property type="component" value="Chromosome 4"/>
</dbReference>
<dbReference type="GO" id="GO:0005737">
    <property type="term" value="C:cytoplasm"/>
    <property type="evidence" value="ECO:0000250"/>
    <property type="project" value="UniProtKB"/>
</dbReference>
<dbReference type="GO" id="GO:0045335">
    <property type="term" value="C:phagocytic vesicle"/>
    <property type="evidence" value="ECO:0007005"/>
    <property type="project" value="dictyBase"/>
</dbReference>
<dbReference type="GO" id="GO:0005524">
    <property type="term" value="F:ATP binding"/>
    <property type="evidence" value="ECO:0000318"/>
    <property type="project" value="GO_Central"/>
</dbReference>
<dbReference type="GO" id="GO:0004817">
    <property type="term" value="F:cysteine-tRNA ligase activity"/>
    <property type="evidence" value="ECO:0000250"/>
    <property type="project" value="UniProtKB"/>
</dbReference>
<dbReference type="GO" id="GO:0046872">
    <property type="term" value="F:metal ion binding"/>
    <property type="evidence" value="ECO:0007669"/>
    <property type="project" value="UniProtKB-KW"/>
</dbReference>
<dbReference type="GO" id="GO:0000049">
    <property type="term" value="F:tRNA binding"/>
    <property type="evidence" value="ECO:0000250"/>
    <property type="project" value="UniProtKB"/>
</dbReference>
<dbReference type="GO" id="GO:0006423">
    <property type="term" value="P:cysteinyl-tRNA aminoacylation"/>
    <property type="evidence" value="ECO:0000250"/>
    <property type="project" value="UniProtKB"/>
</dbReference>
<dbReference type="CDD" id="cd00672">
    <property type="entry name" value="CysRS_core"/>
    <property type="match status" value="1"/>
</dbReference>
<dbReference type="FunFam" id="3.40.50.620:FF:000027">
    <property type="entry name" value="Cysteine--tRNA ligase, cytoplasmic"/>
    <property type="match status" value="1"/>
</dbReference>
<dbReference type="Gene3D" id="1.20.120.1910">
    <property type="entry name" value="Cysteine-tRNA ligase, C-terminal anti-codon recognition domain"/>
    <property type="match status" value="1"/>
</dbReference>
<dbReference type="Gene3D" id="3.40.50.620">
    <property type="entry name" value="HUPs"/>
    <property type="match status" value="1"/>
</dbReference>
<dbReference type="HAMAP" id="MF_00041">
    <property type="entry name" value="Cys_tRNA_synth"/>
    <property type="match status" value="1"/>
</dbReference>
<dbReference type="InterPro" id="IPR015803">
    <property type="entry name" value="Cys-tRNA-ligase"/>
</dbReference>
<dbReference type="InterPro" id="IPR024909">
    <property type="entry name" value="Cys-tRNA/MSH_ligase"/>
</dbReference>
<dbReference type="InterPro" id="IPR014729">
    <property type="entry name" value="Rossmann-like_a/b/a_fold"/>
</dbReference>
<dbReference type="InterPro" id="IPR032678">
    <property type="entry name" value="tRNA-synt_1_cat_dom"/>
</dbReference>
<dbReference type="InterPro" id="IPR009080">
    <property type="entry name" value="tRNAsynth_Ia_anticodon-bd"/>
</dbReference>
<dbReference type="NCBIfam" id="TIGR00435">
    <property type="entry name" value="cysS"/>
    <property type="match status" value="1"/>
</dbReference>
<dbReference type="PANTHER" id="PTHR10890:SF3">
    <property type="entry name" value="CYSTEINE--TRNA LIGASE, CYTOPLASMIC"/>
    <property type="match status" value="1"/>
</dbReference>
<dbReference type="PANTHER" id="PTHR10890">
    <property type="entry name" value="CYSTEINYL-TRNA SYNTHETASE"/>
    <property type="match status" value="1"/>
</dbReference>
<dbReference type="Pfam" id="PF01406">
    <property type="entry name" value="tRNA-synt_1e"/>
    <property type="match status" value="1"/>
</dbReference>
<dbReference type="PRINTS" id="PR00983">
    <property type="entry name" value="TRNASYNTHCYS"/>
</dbReference>
<dbReference type="SUPFAM" id="SSF47323">
    <property type="entry name" value="Anticodon-binding domain of a subclass of class I aminoacyl-tRNA synthetases"/>
    <property type="match status" value="1"/>
</dbReference>
<dbReference type="SUPFAM" id="SSF52374">
    <property type="entry name" value="Nucleotidylyl transferase"/>
    <property type="match status" value="1"/>
</dbReference>
<reference key="1">
    <citation type="journal article" date="2005" name="Nature">
        <title>The genome of the social amoeba Dictyostelium discoideum.</title>
        <authorList>
            <person name="Eichinger L."/>
            <person name="Pachebat J.A."/>
            <person name="Gloeckner G."/>
            <person name="Rajandream M.A."/>
            <person name="Sucgang R."/>
            <person name="Berriman M."/>
            <person name="Song J."/>
            <person name="Olsen R."/>
            <person name="Szafranski K."/>
            <person name="Xu Q."/>
            <person name="Tunggal B."/>
            <person name="Kummerfeld S."/>
            <person name="Madera M."/>
            <person name="Konfortov B.A."/>
            <person name="Rivero F."/>
            <person name="Bankier A.T."/>
            <person name="Lehmann R."/>
            <person name="Hamlin N."/>
            <person name="Davies R."/>
            <person name="Gaudet P."/>
            <person name="Fey P."/>
            <person name="Pilcher K."/>
            <person name="Chen G."/>
            <person name="Saunders D."/>
            <person name="Sodergren E.J."/>
            <person name="Davis P."/>
            <person name="Kerhornou A."/>
            <person name="Nie X."/>
            <person name="Hall N."/>
            <person name="Anjard C."/>
            <person name="Hemphill L."/>
            <person name="Bason N."/>
            <person name="Farbrother P."/>
            <person name="Desany B."/>
            <person name="Just E."/>
            <person name="Morio T."/>
            <person name="Rost R."/>
            <person name="Churcher C.M."/>
            <person name="Cooper J."/>
            <person name="Haydock S."/>
            <person name="van Driessche N."/>
            <person name="Cronin A."/>
            <person name="Goodhead I."/>
            <person name="Muzny D.M."/>
            <person name="Mourier T."/>
            <person name="Pain A."/>
            <person name="Lu M."/>
            <person name="Harper D."/>
            <person name="Lindsay R."/>
            <person name="Hauser H."/>
            <person name="James K.D."/>
            <person name="Quiles M."/>
            <person name="Madan Babu M."/>
            <person name="Saito T."/>
            <person name="Buchrieser C."/>
            <person name="Wardroper A."/>
            <person name="Felder M."/>
            <person name="Thangavelu M."/>
            <person name="Johnson D."/>
            <person name="Knights A."/>
            <person name="Loulseged H."/>
            <person name="Mungall K.L."/>
            <person name="Oliver K."/>
            <person name="Price C."/>
            <person name="Quail M.A."/>
            <person name="Urushihara H."/>
            <person name="Hernandez J."/>
            <person name="Rabbinowitsch E."/>
            <person name="Steffen D."/>
            <person name="Sanders M."/>
            <person name="Ma J."/>
            <person name="Kohara Y."/>
            <person name="Sharp S."/>
            <person name="Simmonds M.N."/>
            <person name="Spiegler S."/>
            <person name="Tivey A."/>
            <person name="Sugano S."/>
            <person name="White B."/>
            <person name="Walker D."/>
            <person name="Woodward J.R."/>
            <person name="Winckler T."/>
            <person name="Tanaka Y."/>
            <person name="Shaulsky G."/>
            <person name="Schleicher M."/>
            <person name="Weinstock G.M."/>
            <person name="Rosenthal A."/>
            <person name="Cox E.C."/>
            <person name="Chisholm R.L."/>
            <person name="Gibbs R.A."/>
            <person name="Loomis W.F."/>
            <person name="Platzer M."/>
            <person name="Kay R.R."/>
            <person name="Williams J.G."/>
            <person name="Dear P.H."/>
            <person name="Noegel A.A."/>
            <person name="Barrell B.G."/>
            <person name="Kuspa A."/>
        </authorList>
    </citation>
    <scope>NUCLEOTIDE SEQUENCE [LARGE SCALE GENOMIC DNA]</scope>
    <source>
        <strain>AX4</strain>
    </source>
</reference>
<gene>
    <name type="primary">cysS</name>
    <name type="ORF">DDB_G0287159</name>
</gene>
<organism>
    <name type="scientific">Dictyostelium discoideum</name>
    <name type="common">Social amoeba</name>
    <dbReference type="NCBI Taxonomy" id="44689"/>
    <lineage>
        <taxon>Eukaryota</taxon>
        <taxon>Amoebozoa</taxon>
        <taxon>Evosea</taxon>
        <taxon>Eumycetozoa</taxon>
        <taxon>Dictyostelia</taxon>
        <taxon>Dictyosteliales</taxon>
        <taxon>Dictyosteliaceae</taxon>
        <taxon>Dictyostelium</taxon>
    </lineage>
</organism>
<comment type="catalytic activity">
    <reaction>
        <text>tRNA(Cys) + L-cysteine + ATP = L-cysteinyl-tRNA(Cys) + AMP + diphosphate</text>
        <dbReference type="Rhea" id="RHEA:17773"/>
        <dbReference type="Rhea" id="RHEA-COMP:9661"/>
        <dbReference type="Rhea" id="RHEA-COMP:9679"/>
        <dbReference type="ChEBI" id="CHEBI:30616"/>
        <dbReference type="ChEBI" id="CHEBI:33019"/>
        <dbReference type="ChEBI" id="CHEBI:35235"/>
        <dbReference type="ChEBI" id="CHEBI:78442"/>
        <dbReference type="ChEBI" id="CHEBI:78517"/>
        <dbReference type="ChEBI" id="CHEBI:456215"/>
        <dbReference type="EC" id="6.1.1.16"/>
    </reaction>
</comment>
<comment type="cofactor">
    <cofactor evidence="1">
        <name>Zn(2+)</name>
        <dbReference type="ChEBI" id="CHEBI:29105"/>
    </cofactor>
    <text evidence="1">Binds 1 zinc ion per subunit.</text>
</comment>
<comment type="subcellular location">
    <subcellularLocation>
        <location evidence="1">Cytoplasm</location>
    </subcellularLocation>
</comment>
<comment type="similarity">
    <text evidence="3">Belongs to the class-I aminoacyl-tRNA synthetase family.</text>
</comment>
<evidence type="ECO:0000250" key="1"/>
<evidence type="ECO:0000256" key="2">
    <source>
        <dbReference type="SAM" id="MobiDB-lite"/>
    </source>
</evidence>
<evidence type="ECO:0000305" key="3"/>
<accession>Q54KR1</accession>
<sequence>MSENSSPKLESTSAAAASTKKPFPEWIKPKGKETELLINNSLTGGKVPFVFNESGKGRSLTWYACGPTVYDASHMGHARTYISFDIIRRIMKNYLGFNIQYVMNITDIDDKIIIRANENGISHSDLSKKWETAFFEDMKLLNVLPPDALTRVTEYVPQIVEYVEKIISNGFAYESNGSVYFDTVAFSKAHDYGKLEPNSVGNEKLAAEGEGSLTATSAVSEKRSGFDFALWKKSKPGEPVWNSPWGEGRPGWHIECSAMASDLLGGNIDIHSGGSDLKFPHHDNELAQSEAFYGNRQWINYFVHSGHLLIDGLKMSKSLKNFITIKQALEKYTSRQMRMFFILHKYDKAMNYSPESMGYAIEMEKTFVEFFHTAKQILRDSPLSLPQFWTQAEKDLNKHLQNANDQVHQFILDNFNTSDALKTLSDLVNKTNVYIRSCAEQKTNPRLNLISAIAEYITYIFSVFGLTESSTASSMIGFGSAGKGNIEEEMTPILNALTQFRSEVRASAIAKDTTSILKTCDNLRDEVLPLLGVKIDDKSATTAMWKFEDKETLKKEIEQKKEIEKKKQADKEEKEKKLKEKFEKSKIPPQQLFINETDKYSKFNELGMPTHDKEGVEITKSQLKKLQKEYDNQTKEHNNYLKSLSTSTSSPTLTSTQSPQ</sequence>
<name>SYCC_DICDI</name>
<proteinExistence type="inferred from homology"/>
<protein>
    <recommendedName>
        <fullName>Cysteine--tRNA ligase, cytoplasmic</fullName>
        <ecNumber>6.1.1.16</ecNumber>
    </recommendedName>
    <alternativeName>
        <fullName>Cysteinyl-tRNA synthetase</fullName>
        <shortName>CysRS</shortName>
    </alternativeName>
</protein>
<feature type="chain" id="PRO_0000328521" description="Cysteine--tRNA ligase, cytoplasmic">
    <location>
        <begin position="1"/>
        <end position="660"/>
    </location>
</feature>
<feature type="region of interest" description="Disordered" evidence="2">
    <location>
        <begin position="1"/>
        <end position="20"/>
    </location>
</feature>
<feature type="region of interest" description="Disordered" evidence="2">
    <location>
        <begin position="563"/>
        <end position="584"/>
    </location>
</feature>
<feature type="region of interest" description="Disordered" evidence="2">
    <location>
        <begin position="627"/>
        <end position="660"/>
    </location>
</feature>
<feature type="short sequence motif" description="'HIGH' region">
    <location>
        <begin position="67"/>
        <end position="77"/>
    </location>
</feature>
<feature type="short sequence motif" description="'KMSKS' region">
    <location>
        <begin position="314"/>
        <end position="318"/>
    </location>
</feature>
<feature type="compositionally biased region" description="Polar residues" evidence="2">
    <location>
        <begin position="1"/>
        <end position="10"/>
    </location>
</feature>
<feature type="compositionally biased region" description="Basic and acidic residues" evidence="2">
    <location>
        <begin position="627"/>
        <end position="639"/>
    </location>
</feature>
<feature type="compositionally biased region" description="Low complexity" evidence="2">
    <location>
        <begin position="643"/>
        <end position="660"/>
    </location>
</feature>
<feature type="binding site" evidence="1">
    <location>
        <position position="65"/>
    </location>
    <ligand>
        <name>Zn(2+)</name>
        <dbReference type="ChEBI" id="CHEBI:29105"/>
    </ligand>
</feature>
<feature type="binding site" evidence="1">
    <location>
        <position position="256"/>
    </location>
    <ligand>
        <name>Zn(2+)</name>
        <dbReference type="ChEBI" id="CHEBI:29105"/>
    </ligand>
</feature>
<feature type="binding site" evidence="1">
    <location>
        <position position="281"/>
    </location>
    <ligand>
        <name>Zn(2+)</name>
        <dbReference type="ChEBI" id="CHEBI:29105"/>
    </ligand>
</feature>
<feature type="binding site" evidence="1">
    <location>
        <position position="285"/>
    </location>
    <ligand>
        <name>Zn(2+)</name>
        <dbReference type="ChEBI" id="CHEBI:29105"/>
    </ligand>
</feature>
<feature type="binding site" evidence="1">
    <location>
        <position position="317"/>
    </location>
    <ligand>
        <name>ATP</name>
        <dbReference type="ChEBI" id="CHEBI:30616"/>
    </ligand>
</feature>
<keyword id="KW-0030">Aminoacyl-tRNA synthetase</keyword>
<keyword id="KW-0067">ATP-binding</keyword>
<keyword id="KW-0963">Cytoplasm</keyword>
<keyword id="KW-0436">Ligase</keyword>
<keyword id="KW-0479">Metal-binding</keyword>
<keyword id="KW-0547">Nucleotide-binding</keyword>
<keyword id="KW-0648">Protein biosynthesis</keyword>
<keyword id="KW-1185">Reference proteome</keyword>
<keyword id="KW-0862">Zinc</keyword>